<accession>Q39Z72</accession>
<comment type="catalytic activity">
    <reaction evidence="1">
        <text>L-citrulline + L-aspartate + ATP = 2-(N(omega)-L-arginino)succinate + AMP + diphosphate + H(+)</text>
        <dbReference type="Rhea" id="RHEA:10932"/>
        <dbReference type="ChEBI" id="CHEBI:15378"/>
        <dbReference type="ChEBI" id="CHEBI:29991"/>
        <dbReference type="ChEBI" id="CHEBI:30616"/>
        <dbReference type="ChEBI" id="CHEBI:33019"/>
        <dbReference type="ChEBI" id="CHEBI:57472"/>
        <dbReference type="ChEBI" id="CHEBI:57743"/>
        <dbReference type="ChEBI" id="CHEBI:456215"/>
        <dbReference type="EC" id="6.3.4.5"/>
    </reaction>
</comment>
<comment type="pathway">
    <text evidence="1">Amino-acid biosynthesis; L-arginine biosynthesis; L-arginine from L-ornithine and carbamoyl phosphate: step 2/3.</text>
</comment>
<comment type="subunit">
    <text evidence="1">Homotetramer.</text>
</comment>
<comment type="subcellular location">
    <subcellularLocation>
        <location evidence="1">Cytoplasm</location>
    </subcellularLocation>
</comment>
<comment type="similarity">
    <text evidence="1">Belongs to the argininosuccinate synthase family. Type 1 subfamily.</text>
</comment>
<sequence length="406" mass="45765">MAKVHKDVKKIVLAYSGGLDTSIILKWLKNEYGCEVIAFSADLGQGDELAPIRDKAFATGADKVYIDDLKEEFVRDFVFPMFRANAIYEGHYLLGTSIARPLIAKRQMEIAKIEGADAVSHGATGKGNDQVRFELAYYHFDPAITVVVPWREWKLNSRQALVNYAKKNGIPIPVTKKRPWSSDRNMLHISFEGGILEDTWAEPPENMYVLTKAPEKAPNKPQFVEIEFKNGNAVAVDGEKMSPAQLLAHLNYIGGEHGIGRVDLLENRSVGMKSRGVYETPGGTILREAHSAVEQITMDREVMRIRDSLIPEYARQVYSGYWFSPEREMLQTLIDDSQKCVNGVARVKLYKGHCRTVGRKSETNSLFNLDFATFEKDQVFNQADATGFIKINSLRLRIRALMQGKK</sequence>
<reference key="1">
    <citation type="journal article" date="2009" name="BMC Microbiol.">
        <title>The genome sequence of Geobacter metallireducens: features of metabolism, physiology and regulation common and dissimilar to Geobacter sulfurreducens.</title>
        <authorList>
            <person name="Aklujkar M."/>
            <person name="Krushkal J."/>
            <person name="DiBartolo G."/>
            <person name="Lapidus A."/>
            <person name="Land M.L."/>
            <person name="Lovley D.R."/>
        </authorList>
    </citation>
    <scope>NUCLEOTIDE SEQUENCE [LARGE SCALE GENOMIC DNA]</scope>
    <source>
        <strain>ATCC 53774 / DSM 7210 / GS-15</strain>
    </source>
</reference>
<protein>
    <recommendedName>
        <fullName evidence="1">Argininosuccinate synthase</fullName>
        <ecNumber evidence="1">6.3.4.5</ecNumber>
    </recommendedName>
    <alternativeName>
        <fullName evidence="1">Citrulline--aspartate ligase</fullName>
    </alternativeName>
</protein>
<dbReference type="EC" id="6.3.4.5" evidence="1"/>
<dbReference type="EMBL" id="CP000148">
    <property type="protein sequence ID" value="ABB30452.1"/>
    <property type="molecule type" value="Genomic_DNA"/>
</dbReference>
<dbReference type="RefSeq" id="WP_004512795.1">
    <property type="nucleotide sequence ID" value="NC_007517.1"/>
</dbReference>
<dbReference type="SMR" id="Q39Z72"/>
<dbReference type="STRING" id="269799.Gmet_0206"/>
<dbReference type="KEGG" id="gme:Gmet_0206"/>
<dbReference type="eggNOG" id="COG0137">
    <property type="taxonomic scope" value="Bacteria"/>
</dbReference>
<dbReference type="HOGENOM" id="CLU_032784_4_2_7"/>
<dbReference type="UniPathway" id="UPA00068">
    <property type="reaction ID" value="UER00113"/>
</dbReference>
<dbReference type="Proteomes" id="UP000007073">
    <property type="component" value="Chromosome"/>
</dbReference>
<dbReference type="GO" id="GO:0005737">
    <property type="term" value="C:cytoplasm"/>
    <property type="evidence" value="ECO:0007669"/>
    <property type="project" value="UniProtKB-SubCell"/>
</dbReference>
<dbReference type="GO" id="GO:0004055">
    <property type="term" value="F:argininosuccinate synthase activity"/>
    <property type="evidence" value="ECO:0007669"/>
    <property type="project" value="UniProtKB-UniRule"/>
</dbReference>
<dbReference type="GO" id="GO:0005524">
    <property type="term" value="F:ATP binding"/>
    <property type="evidence" value="ECO:0007669"/>
    <property type="project" value="UniProtKB-UniRule"/>
</dbReference>
<dbReference type="GO" id="GO:0000053">
    <property type="term" value="P:argininosuccinate metabolic process"/>
    <property type="evidence" value="ECO:0007669"/>
    <property type="project" value="TreeGrafter"/>
</dbReference>
<dbReference type="GO" id="GO:0006526">
    <property type="term" value="P:L-arginine biosynthetic process"/>
    <property type="evidence" value="ECO:0007669"/>
    <property type="project" value="UniProtKB-UniRule"/>
</dbReference>
<dbReference type="GO" id="GO:0000050">
    <property type="term" value="P:urea cycle"/>
    <property type="evidence" value="ECO:0007669"/>
    <property type="project" value="TreeGrafter"/>
</dbReference>
<dbReference type="CDD" id="cd01999">
    <property type="entry name" value="ASS"/>
    <property type="match status" value="1"/>
</dbReference>
<dbReference type="FunFam" id="1.20.5.470:FF:000001">
    <property type="entry name" value="Argininosuccinate synthase"/>
    <property type="match status" value="1"/>
</dbReference>
<dbReference type="FunFam" id="3.40.50.620:FF:000019">
    <property type="entry name" value="Argininosuccinate synthase"/>
    <property type="match status" value="1"/>
</dbReference>
<dbReference type="FunFam" id="3.90.1260.10:FF:000007">
    <property type="entry name" value="Argininosuccinate synthase"/>
    <property type="match status" value="1"/>
</dbReference>
<dbReference type="Gene3D" id="3.90.1260.10">
    <property type="entry name" value="Argininosuccinate synthetase, chain A, domain 2"/>
    <property type="match status" value="1"/>
</dbReference>
<dbReference type="Gene3D" id="3.40.50.620">
    <property type="entry name" value="HUPs"/>
    <property type="match status" value="1"/>
</dbReference>
<dbReference type="Gene3D" id="1.20.5.470">
    <property type="entry name" value="Single helix bin"/>
    <property type="match status" value="1"/>
</dbReference>
<dbReference type="HAMAP" id="MF_00005">
    <property type="entry name" value="Arg_succ_synth_type1"/>
    <property type="match status" value="1"/>
</dbReference>
<dbReference type="InterPro" id="IPR048268">
    <property type="entry name" value="Arginosuc_syn_C"/>
</dbReference>
<dbReference type="InterPro" id="IPR048267">
    <property type="entry name" value="Arginosuc_syn_N"/>
</dbReference>
<dbReference type="InterPro" id="IPR001518">
    <property type="entry name" value="Arginosuc_synth"/>
</dbReference>
<dbReference type="InterPro" id="IPR018223">
    <property type="entry name" value="Arginosuc_synth_CS"/>
</dbReference>
<dbReference type="InterPro" id="IPR023434">
    <property type="entry name" value="Arginosuc_synth_type_1_subfam"/>
</dbReference>
<dbReference type="InterPro" id="IPR024074">
    <property type="entry name" value="AS_cat/multimer_dom_body"/>
</dbReference>
<dbReference type="InterPro" id="IPR014729">
    <property type="entry name" value="Rossmann-like_a/b/a_fold"/>
</dbReference>
<dbReference type="NCBIfam" id="TIGR00032">
    <property type="entry name" value="argG"/>
    <property type="match status" value="1"/>
</dbReference>
<dbReference type="NCBIfam" id="NF001770">
    <property type="entry name" value="PRK00509.1"/>
    <property type="match status" value="1"/>
</dbReference>
<dbReference type="PANTHER" id="PTHR11587">
    <property type="entry name" value="ARGININOSUCCINATE SYNTHASE"/>
    <property type="match status" value="1"/>
</dbReference>
<dbReference type="PANTHER" id="PTHR11587:SF2">
    <property type="entry name" value="ARGININOSUCCINATE SYNTHASE"/>
    <property type="match status" value="1"/>
</dbReference>
<dbReference type="Pfam" id="PF20979">
    <property type="entry name" value="Arginosuc_syn_C"/>
    <property type="match status" value="1"/>
</dbReference>
<dbReference type="Pfam" id="PF00764">
    <property type="entry name" value="Arginosuc_synth"/>
    <property type="match status" value="1"/>
</dbReference>
<dbReference type="SUPFAM" id="SSF52402">
    <property type="entry name" value="Adenine nucleotide alpha hydrolases-like"/>
    <property type="match status" value="1"/>
</dbReference>
<dbReference type="SUPFAM" id="SSF69864">
    <property type="entry name" value="Argininosuccinate synthetase, C-terminal domain"/>
    <property type="match status" value="1"/>
</dbReference>
<dbReference type="PROSITE" id="PS00564">
    <property type="entry name" value="ARGININOSUCCIN_SYN_1"/>
    <property type="match status" value="1"/>
</dbReference>
<dbReference type="PROSITE" id="PS00565">
    <property type="entry name" value="ARGININOSUCCIN_SYN_2"/>
    <property type="match status" value="1"/>
</dbReference>
<gene>
    <name evidence="1" type="primary">argG</name>
    <name type="ordered locus">Gmet_0206</name>
</gene>
<organism>
    <name type="scientific">Geobacter metallireducens (strain ATCC 53774 / DSM 7210 / GS-15)</name>
    <dbReference type="NCBI Taxonomy" id="269799"/>
    <lineage>
        <taxon>Bacteria</taxon>
        <taxon>Pseudomonadati</taxon>
        <taxon>Thermodesulfobacteriota</taxon>
        <taxon>Desulfuromonadia</taxon>
        <taxon>Geobacterales</taxon>
        <taxon>Geobacteraceae</taxon>
        <taxon>Geobacter</taxon>
    </lineage>
</organism>
<name>ASSY_GEOMG</name>
<proteinExistence type="inferred from homology"/>
<evidence type="ECO:0000255" key="1">
    <source>
        <dbReference type="HAMAP-Rule" id="MF_00005"/>
    </source>
</evidence>
<keyword id="KW-0028">Amino-acid biosynthesis</keyword>
<keyword id="KW-0055">Arginine biosynthesis</keyword>
<keyword id="KW-0067">ATP-binding</keyword>
<keyword id="KW-0963">Cytoplasm</keyword>
<keyword id="KW-0436">Ligase</keyword>
<keyword id="KW-0547">Nucleotide-binding</keyword>
<keyword id="KW-1185">Reference proteome</keyword>
<feature type="chain" id="PRO_0000263928" description="Argininosuccinate synthase">
    <location>
        <begin position="1"/>
        <end position="406"/>
    </location>
</feature>
<feature type="binding site" evidence="1">
    <location>
        <begin position="14"/>
        <end position="22"/>
    </location>
    <ligand>
        <name>ATP</name>
        <dbReference type="ChEBI" id="CHEBI:30616"/>
    </ligand>
</feature>
<feature type="binding site" evidence="1">
    <location>
        <position position="41"/>
    </location>
    <ligand>
        <name>ATP</name>
        <dbReference type="ChEBI" id="CHEBI:30616"/>
    </ligand>
</feature>
<feature type="binding site" evidence="1">
    <location>
        <position position="92"/>
    </location>
    <ligand>
        <name>L-citrulline</name>
        <dbReference type="ChEBI" id="CHEBI:57743"/>
    </ligand>
</feature>
<feature type="binding site" evidence="1">
    <location>
        <position position="97"/>
    </location>
    <ligand>
        <name>L-citrulline</name>
        <dbReference type="ChEBI" id="CHEBI:57743"/>
    </ligand>
</feature>
<feature type="binding site" evidence="1">
    <location>
        <position position="122"/>
    </location>
    <ligand>
        <name>ATP</name>
        <dbReference type="ChEBI" id="CHEBI:30616"/>
    </ligand>
</feature>
<feature type="binding site" evidence="1">
    <location>
        <position position="124"/>
    </location>
    <ligand>
        <name>L-aspartate</name>
        <dbReference type="ChEBI" id="CHEBI:29991"/>
    </ligand>
</feature>
<feature type="binding site" evidence="1">
    <location>
        <position position="128"/>
    </location>
    <ligand>
        <name>L-aspartate</name>
        <dbReference type="ChEBI" id="CHEBI:29991"/>
    </ligand>
</feature>
<feature type="binding site" evidence="1">
    <location>
        <position position="128"/>
    </location>
    <ligand>
        <name>L-citrulline</name>
        <dbReference type="ChEBI" id="CHEBI:57743"/>
    </ligand>
</feature>
<feature type="binding site" evidence="1">
    <location>
        <position position="129"/>
    </location>
    <ligand>
        <name>L-aspartate</name>
        <dbReference type="ChEBI" id="CHEBI:29991"/>
    </ligand>
</feature>
<feature type="binding site" evidence="1">
    <location>
        <position position="132"/>
    </location>
    <ligand>
        <name>L-citrulline</name>
        <dbReference type="ChEBI" id="CHEBI:57743"/>
    </ligand>
</feature>
<feature type="binding site" evidence="1">
    <location>
        <position position="181"/>
    </location>
    <ligand>
        <name>L-citrulline</name>
        <dbReference type="ChEBI" id="CHEBI:57743"/>
    </ligand>
</feature>
<feature type="binding site" evidence="1">
    <location>
        <position position="190"/>
    </location>
    <ligand>
        <name>L-citrulline</name>
        <dbReference type="ChEBI" id="CHEBI:57743"/>
    </ligand>
</feature>
<feature type="binding site" evidence="1">
    <location>
        <position position="266"/>
    </location>
    <ligand>
        <name>L-citrulline</name>
        <dbReference type="ChEBI" id="CHEBI:57743"/>
    </ligand>
</feature>
<feature type="binding site" evidence="1">
    <location>
        <position position="278"/>
    </location>
    <ligand>
        <name>L-citrulline</name>
        <dbReference type="ChEBI" id="CHEBI:57743"/>
    </ligand>
</feature>